<dbReference type="EC" id="6.3.5.5" evidence="1"/>
<dbReference type="EMBL" id="AJ431666">
    <property type="protein sequence ID" value="CAD24314.2"/>
    <property type="molecule type" value="Genomic_DNA"/>
</dbReference>
<dbReference type="SMR" id="Q8RSS4"/>
<dbReference type="BRENDA" id="6.3.5.5">
    <property type="organism ID" value="7241"/>
</dbReference>
<dbReference type="UniPathway" id="UPA00068">
    <property type="reaction ID" value="UER00171"/>
</dbReference>
<dbReference type="UniPathway" id="UPA00070">
    <property type="reaction ID" value="UER00115"/>
</dbReference>
<dbReference type="GO" id="GO:0005524">
    <property type="term" value="F:ATP binding"/>
    <property type="evidence" value="ECO:0007669"/>
    <property type="project" value="UniProtKB-UniRule"/>
</dbReference>
<dbReference type="GO" id="GO:0004088">
    <property type="term" value="F:carbamoyl-phosphate synthase (glutamine-hydrolyzing) activity"/>
    <property type="evidence" value="ECO:0007669"/>
    <property type="project" value="UniProtKB-UniRule"/>
</dbReference>
<dbReference type="GO" id="GO:0004359">
    <property type="term" value="F:glutaminase activity"/>
    <property type="evidence" value="ECO:0007669"/>
    <property type="project" value="RHEA"/>
</dbReference>
<dbReference type="GO" id="GO:0006207">
    <property type="term" value="P:'de novo' pyrimidine nucleobase biosynthetic process"/>
    <property type="evidence" value="ECO:0007669"/>
    <property type="project" value="InterPro"/>
</dbReference>
<dbReference type="GO" id="GO:0044205">
    <property type="term" value="P:'de novo' UMP biosynthetic process"/>
    <property type="evidence" value="ECO:0007669"/>
    <property type="project" value="UniProtKB-UniRule"/>
</dbReference>
<dbReference type="GO" id="GO:0006541">
    <property type="term" value="P:glutamine metabolic process"/>
    <property type="evidence" value="ECO:0007669"/>
    <property type="project" value="InterPro"/>
</dbReference>
<dbReference type="GO" id="GO:0006526">
    <property type="term" value="P:L-arginine biosynthetic process"/>
    <property type="evidence" value="ECO:0007669"/>
    <property type="project" value="UniProtKB-UniRule"/>
</dbReference>
<dbReference type="CDD" id="cd01744">
    <property type="entry name" value="GATase1_CPSase"/>
    <property type="match status" value="1"/>
</dbReference>
<dbReference type="FunFam" id="3.40.50.880:FF:000011">
    <property type="entry name" value="Carbamoyl-phosphate synthase small chain"/>
    <property type="match status" value="1"/>
</dbReference>
<dbReference type="FunFam" id="3.50.30.20:FF:000001">
    <property type="entry name" value="Carbamoyl-phosphate synthase small chain"/>
    <property type="match status" value="1"/>
</dbReference>
<dbReference type="Gene3D" id="3.40.50.880">
    <property type="match status" value="1"/>
</dbReference>
<dbReference type="Gene3D" id="3.50.30.20">
    <property type="entry name" value="Carbamoyl-phosphate synthase small subunit, N-terminal domain"/>
    <property type="match status" value="1"/>
</dbReference>
<dbReference type="HAMAP" id="MF_01209">
    <property type="entry name" value="CPSase_S_chain"/>
    <property type="match status" value="1"/>
</dbReference>
<dbReference type="InterPro" id="IPR050472">
    <property type="entry name" value="Anth_synth/Amidotransfase"/>
</dbReference>
<dbReference type="InterPro" id="IPR006274">
    <property type="entry name" value="CarbamoylP_synth_ssu"/>
</dbReference>
<dbReference type="InterPro" id="IPR002474">
    <property type="entry name" value="CarbamoylP_synth_ssu_N"/>
</dbReference>
<dbReference type="InterPro" id="IPR036480">
    <property type="entry name" value="CarbP_synth_ssu_N_sf"/>
</dbReference>
<dbReference type="InterPro" id="IPR029062">
    <property type="entry name" value="Class_I_gatase-like"/>
</dbReference>
<dbReference type="InterPro" id="IPR035686">
    <property type="entry name" value="CPSase_GATase1"/>
</dbReference>
<dbReference type="InterPro" id="IPR017926">
    <property type="entry name" value="GATASE"/>
</dbReference>
<dbReference type="NCBIfam" id="TIGR01368">
    <property type="entry name" value="CPSaseIIsmall"/>
    <property type="match status" value="1"/>
</dbReference>
<dbReference type="NCBIfam" id="NF009475">
    <property type="entry name" value="PRK12838.1"/>
    <property type="match status" value="1"/>
</dbReference>
<dbReference type="PANTHER" id="PTHR43418:SF7">
    <property type="entry name" value="CARBAMOYL-PHOSPHATE SYNTHASE SMALL CHAIN"/>
    <property type="match status" value="1"/>
</dbReference>
<dbReference type="PANTHER" id="PTHR43418">
    <property type="entry name" value="MULTIFUNCTIONAL TRYPTOPHAN BIOSYNTHESIS PROTEIN-RELATED"/>
    <property type="match status" value="1"/>
</dbReference>
<dbReference type="Pfam" id="PF00988">
    <property type="entry name" value="CPSase_sm_chain"/>
    <property type="match status" value="1"/>
</dbReference>
<dbReference type="Pfam" id="PF00117">
    <property type="entry name" value="GATase"/>
    <property type="match status" value="1"/>
</dbReference>
<dbReference type="PRINTS" id="PR00099">
    <property type="entry name" value="CPSGATASE"/>
</dbReference>
<dbReference type="PRINTS" id="PR00096">
    <property type="entry name" value="GATASE"/>
</dbReference>
<dbReference type="SMART" id="SM01097">
    <property type="entry name" value="CPSase_sm_chain"/>
    <property type="match status" value="1"/>
</dbReference>
<dbReference type="SUPFAM" id="SSF52021">
    <property type="entry name" value="Carbamoyl phosphate synthetase, small subunit N-terminal domain"/>
    <property type="match status" value="1"/>
</dbReference>
<dbReference type="SUPFAM" id="SSF52317">
    <property type="entry name" value="Class I glutamine amidotransferase-like"/>
    <property type="match status" value="1"/>
</dbReference>
<dbReference type="PROSITE" id="PS51273">
    <property type="entry name" value="GATASE_TYPE_1"/>
    <property type="match status" value="1"/>
</dbReference>
<proteinExistence type="inferred from homology"/>
<protein>
    <recommendedName>
        <fullName evidence="1">Carbamoyl phosphate synthase small chain</fullName>
        <ecNumber evidence="1">6.3.5.5</ecNumber>
    </recommendedName>
    <alternativeName>
        <fullName evidence="1">Carbamoyl phosphate synthetase glutamine chain</fullName>
    </alternativeName>
</protein>
<organism>
    <name type="scientific">Halomonas eurihalina</name>
    <dbReference type="NCBI Taxonomy" id="42566"/>
    <lineage>
        <taxon>Bacteria</taxon>
        <taxon>Pseudomonadati</taxon>
        <taxon>Pseudomonadota</taxon>
        <taxon>Gammaproteobacteria</taxon>
        <taxon>Oceanospirillales</taxon>
        <taxon>Halomonadaceae</taxon>
        <taxon>Halomonas</taxon>
    </lineage>
</organism>
<accession>Q8RSS4</accession>
<sequence length="381" mass="41129">MSKPAILALEDGSVFHGTAIGADGQTSGEVVFNTAMTGYQEILTDPSYSRQIVTLTYPHIGNTGVNSEDVESSSIAAAGLVIRDLPLLASSFRCEQSLSDYLAQQNVLGIADMHTRRLTRLLRDKGSQNGAILAGPDAEGEDAEARALEAARAFPGLKGMDLAKVVSCAEPYEWSEGEWTLGSGYADVSQGDRPYHVVAYDYGMKRNILRMLAARGCRLTVVPAQTPAEEVLAMNPDGIFLSNGPGDPEPCDYAISAIQAFLETEIPVFGICLGHQLLALASGAQTVKMNHGHHGANHPVQDLDSGRVMITSQNHGFAVEESTLPDNLRAIHRSLFDGTLQGIERTDRPAFSFQGHPEASPGPRDVAPLFDRFVEMMRHRR</sequence>
<gene>
    <name evidence="1" type="primary">carA</name>
</gene>
<reference key="1">
    <citation type="journal article" date="2003" name="Extremophiles">
        <title>Identification and characterization of the carAB genes responsible for encoding carbamoylphosphate synthetase in Halomonas eurihalina.</title>
        <authorList>
            <person name="Llamas I."/>
            <person name="Suarez A."/>
            <person name="Quesada E."/>
            <person name="Bejar V."/>
            <person name="del Moral A."/>
        </authorList>
    </citation>
    <scope>NUCLEOTIDE SEQUENCE [GENOMIC DNA]</scope>
    <source>
        <strain>F2-7</strain>
    </source>
</reference>
<reference key="2">
    <citation type="submission" date="2010-06" db="EMBL/GenBank/DDBJ databases">
        <authorList>
            <person name="Llamas I."/>
        </authorList>
    </citation>
    <scope>SEQUENCE REVISION TO 98; 277 AND 369</scope>
</reference>
<name>CARA_HALER</name>
<feature type="chain" id="PRO_0000112280" description="Carbamoyl phosphate synthase small chain">
    <location>
        <begin position="1"/>
        <end position="381"/>
    </location>
</feature>
<feature type="domain" description="Glutamine amidotransferase type-1" evidence="1">
    <location>
        <begin position="196"/>
        <end position="381"/>
    </location>
</feature>
<feature type="region of interest" description="CPSase" evidence="1">
    <location>
        <begin position="1"/>
        <end position="192"/>
    </location>
</feature>
<feature type="active site" description="Nucleophile" evidence="1">
    <location>
        <position position="272"/>
    </location>
</feature>
<feature type="active site" evidence="1">
    <location>
        <position position="356"/>
    </location>
</feature>
<feature type="active site" evidence="1">
    <location>
        <position position="358"/>
    </location>
</feature>
<feature type="binding site" evidence="1">
    <location>
        <position position="47"/>
    </location>
    <ligand>
        <name>L-glutamine</name>
        <dbReference type="ChEBI" id="CHEBI:58359"/>
    </ligand>
</feature>
<feature type="binding site" evidence="1">
    <location>
        <position position="244"/>
    </location>
    <ligand>
        <name>L-glutamine</name>
        <dbReference type="ChEBI" id="CHEBI:58359"/>
    </ligand>
</feature>
<feature type="binding site" evidence="1">
    <location>
        <position position="246"/>
    </location>
    <ligand>
        <name>L-glutamine</name>
        <dbReference type="ChEBI" id="CHEBI:58359"/>
    </ligand>
</feature>
<feature type="binding site" evidence="1">
    <location>
        <position position="273"/>
    </location>
    <ligand>
        <name>L-glutamine</name>
        <dbReference type="ChEBI" id="CHEBI:58359"/>
    </ligand>
</feature>
<feature type="binding site" evidence="1">
    <location>
        <position position="276"/>
    </location>
    <ligand>
        <name>L-glutamine</name>
        <dbReference type="ChEBI" id="CHEBI:58359"/>
    </ligand>
</feature>
<feature type="binding site" evidence="1">
    <location>
        <position position="314"/>
    </location>
    <ligand>
        <name>L-glutamine</name>
        <dbReference type="ChEBI" id="CHEBI:58359"/>
    </ligand>
</feature>
<feature type="binding site" evidence="1">
    <location>
        <position position="316"/>
    </location>
    <ligand>
        <name>L-glutamine</name>
        <dbReference type="ChEBI" id="CHEBI:58359"/>
    </ligand>
</feature>
<feature type="binding site" evidence="1">
    <location>
        <position position="317"/>
    </location>
    <ligand>
        <name>L-glutamine</name>
        <dbReference type="ChEBI" id="CHEBI:58359"/>
    </ligand>
</feature>
<comment type="function">
    <text evidence="1">Small subunit of the glutamine-dependent carbamoyl phosphate synthetase (CPSase). CPSase catalyzes the formation of carbamoyl phosphate from the ammonia moiety of glutamine, carbonate, and phosphate donated by ATP, constituting the first step of 2 biosynthetic pathways, one leading to arginine and/or urea and the other to pyrimidine nucleotides. The small subunit (glutamine amidotransferase) binds and cleaves glutamine to supply the large subunit with the substrate ammonia.</text>
</comment>
<comment type="catalytic activity">
    <reaction evidence="1">
        <text>hydrogencarbonate + L-glutamine + 2 ATP + H2O = carbamoyl phosphate + L-glutamate + 2 ADP + phosphate + 2 H(+)</text>
        <dbReference type="Rhea" id="RHEA:18633"/>
        <dbReference type="ChEBI" id="CHEBI:15377"/>
        <dbReference type="ChEBI" id="CHEBI:15378"/>
        <dbReference type="ChEBI" id="CHEBI:17544"/>
        <dbReference type="ChEBI" id="CHEBI:29985"/>
        <dbReference type="ChEBI" id="CHEBI:30616"/>
        <dbReference type="ChEBI" id="CHEBI:43474"/>
        <dbReference type="ChEBI" id="CHEBI:58228"/>
        <dbReference type="ChEBI" id="CHEBI:58359"/>
        <dbReference type="ChEBI" id="CHEBI:456216"/>
        <dbReference type="EC" id="6.3.5.5"/>
    </reaction>
</comment>
<comment type="catalytic activity">
    <molecule>Carbamoyl phosphate synthase small chain</molecule>
    <reaction evidence="1">
        <text>L-glutamine + H2O = L-glutamate + NH4(+)</text>
        <dbReference type="Rhea" id="RHEA:15889"/>
        <dbReference type="ChEBI" id="CHEBI:15377"/>
        <dbReference type="ChEBI" id="CHEBI:28938"/>
        <dbReference type="ChEBI" id="CHEBI:29985"/>
        <dbReference type="ChEBI" id="CHEBI:58359"/>
    </reaction>
</comment>
<comment type="pathway">
    <text evidence="1">Amino-acid biosynthesis; L-arginine biosynthesis; carbamoyl phosphate from bicarbonate: step 1/1.</text>
</comment>
<comment type="pathway">
    <text evidence="1">Pyrimidine metabolism; UMP biosynthesis via de novo pathway; (S)-dihydroorotate from bicarbonate: step 1/3.</text>
</comment>
<comment type="subunit">
    <text evidence="1">Composed of two chains; the small (or glutamine) chain promotes the hydrolysis of glutamine to ammonia, which is used by the large (or ammonia) chain to synthesize carbamoyl phosphate. Tetramer of heterodimers (alpha,beta)4.</text>
</comment>
<comment type="similarity">
    <text evidence="1">Belongs to the CarA family.</text>
</comment>
<keyword id="KW-0028">Amino-acid biosynthesis</keyword>
<keyword id="KW-0055">Arginine biosynthesis</keyword>
<keyword id="KW-0067">ATP-binding</keyword>
<keyword id="KW-0315">Glutamine amidotransferase</keyword>
<keyword id="KW-0436">Ligase</keyword>
<keyword id="KW-0547">Nucleotide-binding</keyword>
<keyword id="KW-0665">Pyrimidine biosynthesis</keyword>
<evidence type="ECO:0000255" key="1">
    <source>
        <dbReference type="HAMAP-Rule" id="MF_01209"/>
    </source>
</evidence>